<gene>
    <name type="primary">Map9</name>
    <name type="synonym">Asap</name>
    <name type="synonym">Mtap9</name>
</gene>
<name>MAP9_MOUSE</name>
<comment type="function">
    <text evidence="1">Involved in organization of the bipolar mitotic spindle. Required for bipolar spindle assembly, mitosis progression and cytokinesis. May act by stabilizing interphase microtubules (By similarity).</text>
</comment>
<comment type="subunit">
    <text evidence="1">Binds to purified microtubules via its C-terminus.</text>
</comment>
<comment type="subcellular location">
    <subcellularLocation>
        <location>Cytoplasm</location>
    </subcellularLocation>
    <subcellularLocation>
        <location evidence="1">Cytoplasm</location>
        <location evidence="1">Cytoskeleton</location>
    </subcellularLocation>
    <subcellularLocation>
        <location evidence="1">Cytoplasm</location>
        <location evidence="1">Cytoskeleton</location>
        <location evidence="1">Spindle</location>
    </subcellularLocation>
    <text evidence="1">Localizes to microtubules in interphase, associates with the mitotic spindle during mitosis, localizes to the central body during cytokinesis.</text>
</comment>
<comment type="alternative products">
    <event type="alternative splicing"/>
    <isoform>
        <id>Q3TRR0-1</id>
        <name>1</name>
        <sequence type="displayed"/>
    </isoform>
    <isoform>
        <id>Q3TRR0-2</id>
        <name>2</name>
        <sequence type="described" ref="VSP_020039"/>
    </isoform>
</comment>
<comment type="sequence caution" evidence="6">
    <conflict type="miscellaneous discrepancy">
        <sequence resource="EMBL-CDS" id="AAH61216"/>
    </conflict>
    <text>Contaminating sequence. Potential poly-A sequence.</text>
</comment>
<comment type="sequence caution" evidence="6">
    <conflict type="miscellaneous discrepancy">
        <sequence resource="EMBL-CDS" id="AAH87935"/>
    </conflict>
    <text>Contaminating sequence. Potential poly-A sequence.</text>
</comment>
<comment type="sequence caution" evidence="6">
    <conflict type="frameshift">
        <sequence resource="EMBL" id="AK147287"/>
    </conflict>
</comment>
<organism>
    <name type="scientific">Mus musculus</name>
    <name type="common">Mouse</name>
    <dbReference type="NCBI Taxonomy" id="10090"/>
    <lineage>
        <taxon>Eukaryota</taxon>
        <taxon>Metazoa</taxon>
        <taxon>Chordata</taxon>
        <taxon>Craniata</taxon>
        <taxon>Vertebrata</taxon>
        <taxon>Euteleostomi</taxon>
        <taxon>Mammalia</taxon>
        <taxon>Eutheria</taxon>
        <taxon>Euarchontoglires</taxon>
        <taxon>Glires</taxon>
        <taxon>Rodentia</taxon>
        <taxon>Myomorpha</taxon>
        <taxon>Muroidea</taxon>
        <taxon>Muridae</taxon>
        <taxon>Murinae</taxon>
        <taxon>Mus</taxon>
        <taxon>Mus</taxon>
    </lineage>
</organism>
<reference key="1">
    <citation type="journal article" date="2005" name="Science">
        <title>The transcriptional landscape of the mammalian genome.</title>
        <authorList>
            <person name="Carninci P."/>
            <person name="Kasukawa T."/>
            <person name="Katayama S."/>
            <person name="Gough J."/>
            <person name="Frith M.C."/>
            <person name="Maeda N."/>
            <person name="Oyama R."/>
            <person name="Ravasi T."/>
            <person name="Lenhard B."/>
            <person name="Wells C."/>
            <person name="Kodzius R."/>
            <person name="Shimokawa K."/>
            <person name="Bajic V.B."/>
            <person name="Brenner S.E."/>
            <person name="Batalov S."/>
            <person name="Forrest A.R."/>
            <person name="Zavolan M."/>
            <person name="Davis M.J."/>
            <person name="Wilming L.G."/>
            <person name="Aidinis V."/>
            <person name="Allen J.E."/>
            <person name="Ambesi-Impiombato A."/>
            <person name="Apweiler R."/>
            <person name="Aturaliya R.N."/>
            <person name="Bailey T.L."/>
            <person name="Bansal M."/>
            <person name="Baxter L."/>
            <person name="Beisel K.W."/>
            <person name="Bersano T."/>
            <person name="Bono H."/>
            <person name="Chalk A.M."/>
            <person name="Chiu K.P."/>
            <person name="Choudhary V."/>
            <person name="Christoffels A."/>
            <person name="Clutterbuck D.R."/>
            <person name="Crowe M.L."/>
            <person name="Dalla E."/>
            <person name="Dalrymple B.P."/>
            <person name="de Bono B."/>
            <person name="Della Gatta G."/>
            <person name="di Bernardo D."/>
            <person name="Down T."/>
            <person name="Engstrom P."/>
            <person name="Fagiolini M."/>
            <person name="Faulkner G."/>
            <person name="Fletcher C.F."/>
            <person name="Fukushima T."/>
            <person name="Furuno M."/>
            <person name="Futaki S."/>
            <person name="Gariboldi M."/>
            <person name="Georgii-Hemming P."/>
            <person name="Gingeras T.R."/>
            <person name="Gojobori T."/>
            <person name="Green R.E."/>
            <person name="Gustincich S."/>
            <person name="Harbers M."/>
            <person name="Hayashi Y."/>
            <person name="Hensch T.K."/>
            <person name="Hirokawa N."/>
            <person name="Hill D."/>
            <person name="Huminiecki L."/>
            <person name="Iacono M."/>
            <person name="Ikeo K."/>
            <person name="Iwama A."/>
            <person name="Ishikawa T."/>
            <person name="Jakt M."/>
            <person name="Kanapin A."/>
            <person name="Katoh M."/>
            <person name="Kawasawa Y."/>
            <person name="Kelso J."/>
            <person name="Kitamura H."/>
            <person name="Kitano H."/>
            <person name="Kollias G."/>
            <person name="Krishnan S.P."/>
            <person name="Kruger A."/>
            <person name="Kummerfeld S.K."/>
            <person name="Kurochkin I.V."/>
            <person name="Lareau L.F."/>
            <person name="Lazarevic D."/>
            <person name="Lipovich L."/>
            <person name="Liu J."/>
            <person name="Liuni S."/>
            <person name="McWilliam S."/>
            <person name="Madan Babu M."/>
            <person name="Madera M."/>
            <person name="Marchionni L."/>
            <person name="Matsuda H."/>
            <person name="Matsuzawa S."/>
            <person name="Miki H."/>
            <person name="Mignone F."/>
            <person name="Miyake S."/>
            <person name="Morris K."/>
            <person name="Mottagui-Tabar S."/>
            <person name="Mulder N."/>
            <person name="Nakano N."/>
            <person name="Nakauchi H."/>
            <person name="Ng P."/>
            <person name="Nilsson R."/>
            <person name="Nishiguchi S."/>
            <person name="Nishikawa S."/>
            <person name="Nori F."/>
            <person name="Ohara O."/>
            <person name="Okazaki Y."/>
            <person name="Orlando V."/>
            <person name="Pang K.C."/>
            <person name="Pavan W.J."/>
            <person name="Pavesi G."/>
            <person name="Pesole G."/>
            <person name="Petrovsky N."/>
            <person name="Piazza S."/>
            <person name="Reed J."/>
            <person name="Reid J.F."/>
            <person name="Ring B.Z."/>
            <person name="Ringwald M."/>
            <person name="Rost B."/>
            <person name="Ruan Y."/>
            <person name="Salzberg S.L."/>
            <person name="Sandelin A."/>
            <person name="Schneider C."/>
            <person name="Schoenbach C."/>
            <person name="Sekiguchi K."/>
            <person name="Semple C.A."/>
            <person name="Seno S."/>
            <person name="Sessa L."/>
            <person name="Sheng Y."/>
            <person name="Shibata Y."/>
            <person name="Shimada H."/>
            <person name="Shimada K."/>
            <person name="Silva D."/>
            <person name="Sinclair B."/>
            <person name="Sperling S."/>
            <person name="Stupka E."/>
            <person name="Sugiura K."/>
            <person name="Sultana R."/>
            <person name="Takenaka Y."/>
            <person name="Taki K."/>
            <person name="Tammoja K."/>
            <person name="Tan S.L."/>
            <person name="Tang S."/>
            <person name="Taylor M.S."/>
            <person name="Tegner J."/>
            <person name="Teichmann S.A."/>
            <person name="Ueda H.R."/>
            <person name="van Nimwegen E."/>
            <person name="Verardo R."/>
            <person name="Wei C.L."/>
            <person name="Yagi K."/>
            <person name="Yamanishi H."/>
            <person name="Zabarovsky E."/>
            <person name="Zhu S."/>
            <person name="Zimmer A."/>
            <person name="Hide W."/>
            <person name="Bult C."/>
            <person name="Grimmond S.M."/>
            <person name="Teasdale R.D."/>
            <person name="Liu E.T."/>
            <person name="Brusic V."/>
            <person name="Quackenbush J."/>
            <person name="Wahlestedt C."/>
            <person name="Mattick J.S."/>
            <person name="Hume D.A."/>
            <person name="Kai C."/>
            <person name="Sasaki D."/>
            <person name="Tomaru Y."/>
            <person name="Fukuda S."/>
            <person name="Kanamori-Katayama M."/>
            <person name="Suzuki M."/>
            <person name="Aoki J."/>
            <person name="Arakawa T."/>
            <person name="Iida J."/>
            <person name="Imamura K."/>
            <person name="Itoh M."/>
            <person name="Kato T."/>
            <person name="Kawaji H."/>
            <person name="Kawagashira N."/>
            <person name="Kawashima T."/>
            <person name="Kojima M."/>
            <person name="Kondo S."/>
            <person name="Konno H."/>
            <person name="Nakano K."/>
            <person name="Ninomiya N."/>
            <person name="Nishio T."/>
            <person name="Okada M."/>
            <person name="Plessy C."/>
            <person name="Shibata K."/>
            <person name="Shiraki T."/>
            <person name="Suzuki S."/>
            <person name="Tagami M."/>
            <person name="Waki K."/>
            <person name="Watahiki A."/>
            <person name="Okamura-Oho Y."/>
            <person name="Suzuki H."/>
            <person name="Kawai J."/>
            <person name="Hayashizaki Y."/>
        </authorList>
    </citation>
    <scope>NUCLEOTIDE SEQUENCE [LARGE SCALE MRNA] (ISOFORM 1)</scope>
    <scope>NUCLEOTIDE SEQUENCE [LARGE SCALE MRNA] OF 1-493 (ISOFORM 2)</scope>
    <source>
        <strain>C57BL/6J</strain>
        <tissue>Cerebellum</tissue>
        <tissue>Egg</tissue>
        <tissue>Hypothalamus</tissue>
        <tissue>Pituitary</tissue>
        <tissue>Spinal cord</tissue>
    </source>
</reference>
<reference key="2">
    <citation type="journal article" date="2004" name="Genome Res.">
        <title>The status, quality, and expansion of the NIH full-length cDNA project: the Mammalian Gene Collection (MGC).</title>
        <authorList>
            <consortium name="The MGC Project Team"/>
        </authorList>
    </citation>
    <scope>NUCLEOTIDE SEQUENCE [LARGE SCALE MRNA] OF 1-495</scope>
    <source>
        <tissue>Pituitary</tissue>
    </source>
</reference>
<reference key="3">
    <citation type="journal article" date="2010" name="Cell">
        <title>A tissue-specific atlas of mouse protein phosphorylation and expression.</title>
        <authorList>
            <person name="Huttlin E.L."/>
            <person name="Jedrychowski M.P."/>
            <person name="Elias J.E."/>
            <person name="Goswami T."/>
            <person name="Rad R."/>
            <person name="Beausoleil S.A."/>
            <person name="Villen J."/>
            <person name="Haas W."/>
            <person name="Sowa M.E."/>
            <person name="Gygi S.P."/>
        </authorList>
    </citation>
    <scope>IDENTIFICATION BY MASS SPECTROMETRY [LARGE SCALE ANALYSIS]</scope>
    <source>
        <tissue>Brain</tissue>
    </source>
</reference>
<keyword id="KW-0007">Acetylation</keyword>
<keyword id="KW-0025">Alternative splicing</keyword>
<keyword id="KW-0131">Cell cycle</keyword>
<keyword id="KW-0132">Cell division</keyword>
<keyword id="KW-0175">Coiled coil</keyword>
<keyword id="KW-0963">Cytoplasm</keyword>
<keyword id="KW-0206">Cytoskeleton</keyword>
<keyword id="KW-0493">Microtubule</keyword>
<keyword id="KW-0498">Mitosis</keyword>
<keyword id="KW-0597">Phosphoprotein</keyword>
<keyword id="KW-1185">Reference proteome</keyword>
<accession>Q3TRR0</accession>
<accession>Q3UUD1</accession>
<accession>Q3UX85</accession>
<accession>Q3UXE7</accession>
<accession>Q5M8N8</accession>
<accession>Q6P8K1</accession>
<accession>Q8BMM4</accession>
<accession>Q8BYP7</accession>
<protein>
    <recommendedName>
        <fullName>Microtubule-associated protein 9</fullName>
    </recommendedName>
    <alternativeName>
        <fullName>Aster-associated protein</fullName>
    </alternativeName>
</protein>
<feature type="initiator methionine" description="Removed" evidence="2">
    <location>
        <position position="1"/>
    </location>
</feature>
<feature type="chain" id="PRO_0000247754" description="Microtubule-associated protein 9">
    <location>
        <begin position="2"/>
        <end position="646"/>
    </location>
</feature>
<feature type="region of interest" description="Disordered" evidence="4">
    <location>
        <begin position="75"/>
        <end position="226"/>
    </location>
</feature>
<feature type="region of interest" description="Disordered" evidence="4">
    <location>
        <begin position="242"/>
        <end position="418"/>
    </location>
</feature>
<feature type="region of interest" description="Disordered" evidence="4">
    <location>
        <begin position="491"/>
        <end position="511"/>
    </location>
</feature>
<feature type="region of interest" description="Disordered" evidence="4">
    <location>
        <begin position="531"/>
        <end position="554"/>
    </location>
</feature>
<feature type="region of interest" description="Disordered" evidence="4">
    <location>
        <begin position="570"/>
        <end position="597"/>
    </location>
</feature>
<feature type="region of interest" description="Disordered" evidence="4">
    <location>
        <begin position="609"/>
        <end position="646"/>
    </location>
</feature>
<feature type="coiled-coil region" evidence="3">
    <location>
        <begin position="442"/>
        <end position="596"/>
    </location>
</feature>
<feature type="compositionally biased region" description="Polar residues" evidence="4">
    <location>
        <begin position="105"/>
        <end position="119"/>
    </location>
</feature>
<feature type="compositionally biased region" description="Polar residues" evidence="4">
    <location>
        <begin position="157"/>
        <end position="167"/>
    </location>
</feature>
<feature type="compositionally biased region" description="Basic and acidic residues" evidence="4">
    <location>
        <begin position="188"/>
        <end position="204"/>
    </location>
</feature>
<feature type="compositionally biased region" description="Polar residues" evidence="4">
    <location>
        <begin position="205"/>
        <end position="222"/>
    </location>
</feature>
<feature type="compositionally biased region" description="Polar residues" evidence="4">
    <location>
        <begin position="280"/>
        <end position="291"/>
    </location>
</feature>
<feature type="compositionally biased region" description="Polar residues" evidence="4">
    <location>
        <begin position="330"/>
        <end position="340"/>
    </location>
</feature>
<feature type="compositionally biased region" description="Basic and acidic residues" evidence="4">
    <location>
        <begin position="346"/>
        <end position="357"/>
    </location>
</feature>
<feature type="compositionally biased region" description="Polar residues" evidence="4">
    <location>
        <begin position="386"/>
        <end position="398"/>
    </location>
</feature>
<feature type="compositionally biased region" description="Basic and acidic residues" evidence="4">
    <location>
        <begin position="405"/>
        <end position="418"/>
    </location>
</feature>
<feature type="compositionally biased region" description="Polar residues" evidence="4">
    <location>
        <begin position="637"/>
        <end position="646"/>
    </location>
</feature>
<feature type="modified residue" description="N-acetylserine" evidence="2">
    <location>
        <position position="2"/>
    </location>
</feature>
<feature type="modified residue" description="Phosphotyrosine" evidence="2">
    <location>
        <position position="12"/>
    </location>
</feature>
<feature type="splice variant" id="VSP_020039" description="In isoform 2." evidence="5">
    <location>
        <begin position="429"/>
        <end position="458"/>
    </location>
</feature>
<feature type="sequence conflict" description="In Ref. 1; BAE36967." evidence="6" ref="1">
    <original>K</original>
    <variation>P</variation>
    <location>
        <position position="185"/>
    </location>
</feature>
<feature type="sequence conflict" description="In Ref. 1; BAE36967." evidence="6" ref="1">
    <original>S</original>
    <variation>H</variation>
    <location>
        <position position="205"/>
    </location>
</feature>
<proteinExistence type="evidence at protein level"/>
<dbReference type="EMBL" id="AK030527">
    <property type="protein sequence ID" value="BAC27004.2"/>
    <property type="molecule type" value="mRNA"/>
</dbReference>
<dbReference type="EMBL" id="AK038737">
    <property type="protein sequence ID" value="BAC30117.1"/>
    <property type="molecule type" value="mRNA"/>
</dbReference>
<dbReference type="EMBL" id="AK135702">
    <property type="protein sequence ID" value="BAE22616.1"/>
    <property type="molecule type" value="mRNA"/>
</dbReference>
<dbReference type="EMBL" id="AK135823">
    <property type="protein sequence ID" value="BAE22678.1"/>
    <property type="molecule type" value="mRNA"/>
</dbReference>
<dbReference type="EMBL" id="AK138540">
    <property type="protein sequence ID" value="BAE23696.1"/>
    <property type="molecule type" value="mRNA"/>
</dbReference>
<dbReference type="EMBL" id="AK147287">
    <property type="status" value="NOT_ANNOTATED_CDS"/>
    <property type="molecule type" value="mRNA"/>
</dbReference>
<dbReference type="EMBL" id="AK162555">
    <property type="protein sequence ID" value="BAE36967.1"/>
    <property type="molecule type" value="mRNA"/>
</dbReference>
<dbReference type="EMBL" id="BC061216">
    <property type="protein sequence ID" value="AAH61216.1"/>
    <property type="status" value="ALT_SEQ"/>
    <property type="molecule type" value="mRNA"/>
</dbReference>
<dbReference type="EMBL" id="BC087935">
    <property type="protein sequence ID" value="AAH87935.1"/>
    <property type="status" value="ALT_SEQ"/>
    <property type="molecule type" value="mRNA"/>
</dbReference>
<dbReference type="CCDS" id="CCDS38461.1">
    <molecule id="Q3TRR0-1"/>
</dbReference>
<dbReference type="RefSeq" id="NP_001074699.1">
    <molecule id="Q3TRR0-1"/>
    <property type="nucleotide sequence ID" value="NM_001081230.1"/>
</dbReference>
<dbReference type="RefSeq" id="NP_001343386.1">
    <molecule id="Q3TRR0-1"/>
    <property type="nucleotide sequence ID" value="NM_001356457.1"/>
</dbReference>
<dbReference type="RefSeq" id="XP_006501341.1">
    <property type="nucleotide sequence ID" value="XM_006501278.3"/>
</dbReference>
<dbReference type="RefSeq" id="XP_030108399.1">
    <molecule id="Q3TRR0-1"/>
    <property type="nucleotide sequence ID" value="XM_030252539.2"/>
</dbReference>
<dbReference type="RefSeq" id="XP_030108400.1">
    <molecule id="Q3TRR0-1"/>
    <property type="nucleotide sequence ID" value="XM_030252540.2"/>
</dbReference>
<dbReference type="SMR" id="Q3TRR0"/>
<dbReference type="BioGRID" id="229458">
    <property type="interactions" value="7"/>
</dbReference>
<dbReference type="FunCoup" id="Q3TRR0">
    <property type="interactions" value="686"/>
</dbReference>
<dbReference type="IntAct" id="Q3TRR0">
    <property type="interactions" value="3"/>
</dbReference>
<dbReference type="STRING" id="10090.ENSMUSP00000088535"/>
<dbReference type="GlyGen" id="Q3TRR0">
    <property type="glycosylation" value="2 sites"/>
</dbReference>
<dbReference type="iPTMnet" id="Q3TRR0"/>
<dbReference type="PhosphoSitePlus" id="Q3TRR0"/>
<dbReference type="jPOST" id="Q3TRR0"/>
<dbReference type="PaxDb" id="10090-ENSMUSP00000088535"/>
<dbReference type="PeptideAtlas" id="Q3TRR0"/>
<dbReference type="ProteomicsDB" id="295822">
    <molecule id="Q3TRR0-1"/>
</dbReference>
<dbReference type="ProteomicsDB" id="295823">
    <molecule id="Q3TRR0-2"/>
</dbReference>
<dbReference type="Antibodypedia" id="48220">
    <property type="antibodies" value="88 antibodies from 21 providers"/>
</dbReference>
<dbReference type="DNASU" id="213582"/>
<dbReference type="Ensembl" id="ENSMUST00000091014.10">
    <molecule id="Q3TRR0-1"/>
    <property type="protein sequence ID" value="ENSMUSP00000088535.5"/>
    <property type="gene ID" value="ENSMUSG00000033900.14"/>
</dbReference>
<dbReference type="Ensembl" id="ENSMUST00000195640.2">
    <molecule id="Q3TRR0-1"/>
    <property type="protein sequence ID" value="ENSMUSP00000142206.2"/>
    <property type="gene ID" value="ENSMUSG00000033900.14"/>
</dbReference>
<dbReference type="GeneID" id="213582"/>
<dbReference type="KEGG" id="mmu:213582"/>
<dbReference type="UCSC" id="uc008pow.1">
    <molecule id="Q3TRR0-1"/>
    <property type="organism name" value="mouse"/>
</dbReference>
<dbReference type="UCSC" id="uc012cqt.1">
    <molecule id="Q3TRR0-2"/>
    <property type="organism name" value="mouse"/>
</dbReference>
<dbReference type="AGR" id="MGI:2442208"/>
<dbReference type="CTD" id="79884"/>
<dbReference type="MGI" id="MGI:2442208">
    <property type="gene designation" value="Map9"/>
</dbReference>
<dbReference type="VEuPathDB" id="HostDB:ENSMUSG00000033900"/>
<dbReference type="eggNOG" id="ENOG502R2PC">
    <property type="taxonomic scope" value="Eukaryota"/>
</dbReference>
<dbReference type="GeneTree" id="ENSGT00730000111184"/>
<dbReference type="HOGENOM" id="CLU_030160_0_0_1"/>
<dbReference type="InParanoid" id="Q3TRR0"/>
<dbReference type="OMA" id="YENWLVR"/>
<dbReference type="OrthoDB" id="8956542at2759"/>
<dbReference type="PhylomeDB" id="Q3TRR0"/>
<dbReference type="TreeFam" id="TF328794"/>
<dbReference type="BioGRID-ORCS" id="213582">
    <property type="hits" value="2 hits in 76 CRISPR screens"/>
</dbReference>
<dbReference type="CD-CODE" id="CE726F99">
    <property type="entry name" value="Postsynaptic density"/>
</dbReference>
<dbReference type="ChiTaRS" id="Map9">
    <property type="organism name" value="mouse"/>
</dbReference>
<dbReference type="PRO" id="PR:Q3TRR0"/>
<dbReference type="Proteomes" id="UP000000589">
    <property type="component" value="Chromosome 3"/>
</dbReference>
<dbReference type="RNAct" id="Q3TRR0">
    <property type="molecule type" value="protein"/>
</dbReference>
<dbReference type="Bgee" id="ENSMUSG00000033900">
    <property type="expression patterns" value="Expressed in otolith organ and 211 other cell types or tissues"/>
</dbReference>
<dbReference type="ExpressionAtlas" id="Q3TRR0">
    <property type="expression patterns" value="baseline and differential"/>
</dbReference>
<dbReference type="GO" id="GO:0005818">
    <property type="term" value="C:aster"/>
    <property type="evidence" value="ECO:0000314"/>
    <property type="project" value="MGI"/>
</dbReference>
<dbReference type="GO" id="GO:0000235">
    <property type="term" value="C:astral microtubule"/>
    <property type="evidence" value="ECO:0000314"/>
    <property type="project" value="MGI"/>
</dbReference>
<dbReference type="GO" id="GO:0030424">
    <property type="term" value="C:axon"/>
    <property type="evidence" value="ECO:0007669"/>
    <property type="project" value="Ensembl"/>
</dbReference>
<dbReference type="GO" id="GO:0015630">
    <property type="term" value="C:microtubule cytoskeleton"/>
    <property type="evidence" value="ECO:0000314"/>
    <property type="project" value="MGI"/>
</dbReference>
<dbReference type="GO" id="GO:0072686">
    <property type="term" value="C:mitotic spindle"/>
    <property type="evidence" value="ECO:0000314"/>
    <property type="project" value="MGI"/>
</dbReference>
<dbReference type="GO" id="GO:1990023">
    <property type="term" value="C:mitotic spindle midzone"/>
    <property type="evidence" value="ECO:0000314"/>
    <property type="project" value="MGI"/>
</dbReference>
<dbReference type="GO" id="GO:0008017">
    <property type="term" value="F:microtubule binding"/>
    <property type="evidence" value="ECO:0007669"/>
    <property type="project" value="Ensembl"/>
</dbReference>
<dbReference type="GO" id="GO:0000281">
    <property type="term" value="P:mitotic cytokinesis"/>
    <property type="evidence" value="ECO:0007669"/>
    <property type="project" value="InterPro"/>
</dbReference>
<dbReference type="GO" id="GO:0090307">
    <property type="term" value="P:mitotic spindle assembly"/>
    <property type="evidence" value="ECO:0000314"/>
    <property type="project" value="MGI"/>
</dbReference>
<dbReference type="GO" id="GO:0046602">
    <property type="term" value="P:regulation of mitotic centrosome separation"/>
    <property type="evidence" value="ECO:0007669"/>
    <property type="project" value="Ensembl"/>
</dbReference>
<dbReference type="GO" id="GO:1902412">
    <property type="term" value="P:regulation of mitotic cytokinesis"/>
    <property type="evidence" value="ECO:0007669"/>
    <property type="project" value="Ensembl"/>
</dbReference>
<dbReference type="GO" id="GO:0060236">
    <property type="term" value="P:regulation of mitotic spindle organization"/>
    <property type="evidence" value="ECO:0007669"/>
    <property type="project" value="Ensembl"/>
</dbReference>
<dbReference type="InterPro" id="IPR026106">
    <property type="entry name" value="MAP9"/>
</dbReference>
<dbReference type="PANTHER" id="PTHR14739">
    <property type="entry name" value="MICROTUBULE-ASSOCIATED PROTEIN 9"/>
    <property type="match status" value="1"/>
</dbReference>
<dbReference type="PANTHER" id="PTHR14739:SF9">
    <property type="entry name" value="MICROTUBULE-ASSOCIATED PROTEIN 9"/>
    <property type="match status" value="1"/>
</dbReference>
<evidence type="ECO:0000250" key="1"/>
<evidence type="ECO:0000250" key="2">
    <source>
        <dbReference type="UniProtKB" id="Q49MG5"/>
    </source>
</evidence>
<evidence type="ECO:0000255" key="3"/>
<evidence type="ECO:0000256" key="4">
    <source>
        <dbReference type="SAM" id="MobiDB-lite"/>
    </source>
</evidence>
<evidence type="ECO:0000303" key="5">
    <source>
    </source>
</evidence>
<evidence type="ECO:0000305" key="6"/>
<sequence length="646" mass="73511">MSDEIFSTTLAYTKSPKATKRTSFQDELIRAITARSARQRSSEYSDDFDSDEIVSLGEFSDTSTDESLVRKKMNDFHISDDEEKNSPRLSFLKTKKVNRAISNDALDSSTPGSEGSSPDAQEDVTGDSLPKSQNDDREVGREIITVKPTPRMHPVKRSTSSGETSSGLDADGHFKPSPQPRSMLKKSSHTEEGVRPGVDKEHSISEASAPTPSLPRQNGTELQTEEKIYSENLDLEDSLLQSLTSSSFKESPGGCTSPGSQEKVPIKDHDGEPTEIWDSLLSNENEGSSVLVNCVTPELEQPKDGQVAADDLEEEREKGGFTEDDLTTDPLLSTSPSVITPTEPAEPAKKANEDRNTKNKKTTNNRVSSASGRLMTSEFLKRSGPTKRSPSAATSSHYLGSLKVLDQKQPRKQSLEPDKADHIRAAVYQEWLEKKNVYLHEMHRIKRIESENLRIQNEQKKAAKREEALASFEAWKAMKEKEAKRIAAKKRLEEKNKKKTEEENAMRKGEALQAFEKWKEKKLEYLKEKTRREKEYERAKKQKEEEAVAEKKKDSLTAFEKWSERKEALLKQKEKEKINERRKEELKRAEKKDKDKQAISEYEKWLEKKERQERIERKQKKRHSFLESETHPPWSPPSRTAPSKVF</sequence>